<reference key="1">
    <citation type="journal article" date="1993" name="Biochim. Biophys. Acta">
        <title>The isolation and characterization of a Drosophila gene encoding a putative NAD-dependent methylenetetrahydrofolate dehydrogenase-methenyltetrahydrofolate cyclohydrolase.</title>
        <authorList>
            <person name="Price B.D."/>
            <person name="Laughon A."/>
        </authorList>
    </citation>
    <scope>NUCLEOTIDE SEQUENCE [MRNA]</scope>
    <scope>DEVELOPMENTAL STAGE</scope>
</reference>
<reference key="2">
    <citation type="journal article" date="1999" name="Mol. Cell">
        <title>Relish, a central factor in the control of humoral, but not cellular immunity in Drosophila.</title>
        <authorList>
            <person name="Hedengren M."/>
            <person name="Asling B."/>
            <person name="Dushay M.S."/>
            <person name="Ando I."/>
            <person name="Ekengren S."/>
            <person name="Wihlborg M."/>
            <person name="Hultmark D."/>
        </authorList>
    </citation>
    <scope>NUCLEOTIDE SEQUENCE [GENOMIC DNA]</scope>
    <scope>ALTERNATIVE SPLICING</scope>
</reference>
<reference key="3">
    <citation type="journal article" date="2000" name="Science">
        <title>The genome sequence of Drosophila melanogaster.</title>
        <authorList>
            <person name="Adams M.D."/>
            <person name="Celniker S.E."/>
            <person name="Holt R.A."/>
            <person name="Evans C.A."/>
            <person name="Gocayne J.D."/>
            <person name="Amanatides P.G."/>
            <person name="Scherer S.E."/>
            <person name="Li P.W."/>
            <person name="Hoskins R.A."/>
            <person name="Galle R.F."/>
            <person name="George R.A."/>
            <person name="Lewis S.E."/>
            <person name="Richards S."/>
            <person name="Ashburner M."/>
            <person name="Henderson S.N."/>
            <person name="Sutton G.G."/>
            <person name="Wortman J.R."/>
            <person name="Yandell M.D."/>
            <person name="Zhang Q."/>
            <person name="Chen L.X."/>
            <person name="Brandon R.C."/>
            <person name="Rogers Y.-H.C."/>
            <person name="Blazej R.G."/>
            <person name="Champe M."/>
            <person name="Pfeiffer B.D."/>
            <person name="Wan K.H."/>
            <person name="Doyle C."/>
            <person name="Baxter E.G."/>
            <person name="Helt G."/>
            <person name="Nelson C.R."/>
            <person name="Miklos G.L.G."/>
            <person name="Abril J.F."/>
            <person name="Agbayani A."/>
            <person name="An H.-J."/>
            <person name="Andrews-Pfannkoch C."/>
            <person name="Baldwin D."/>
            <person name="Ballew R.M."/>
            <person name="Basu A."/>
            <person name="Baxendale J."/>
            <person name="Bayraktaroglu L."/>
            <person name="Beasley E.M."/>
            <person name="Beeson K.Y."/>
            <person name="Benos P.V."/>
            <person name="Berman B.P."/>
            <person name="Bhandari D."/>
            <person name="Bolshakov S."/>
            <person name="Borkova D."/>
            <person name="Botchan M.R."/>
            <person name="Bouck J."/>
            <person name="Brokstein P."/>
            <person name="Brottier P."/>
            <person name="Burtis K.C."/>
            <person name="Busam D.A."/>
            <person name="Butler H."/>
            <person name="Cadieu E."/>
            <person name="Center A."/>
            <person name="Chandra I."/>
            <person name="Cherry J.M."/>
            <person name="Cawley S."/>
            <person name="Dahlke C."/>
            <person name="Davenport L.B."/>
            <person name="Davies P."/>
            <person name="de Pablos B."/>
            <person name="Delcher A."/>
            <person name="Deng Z."/>
            <person name="Mays A.D."/>
            <person name="Dew I."/>
            <person name="Dietz S.M."/>
            <person name="Dodson K."/>
            <person name="Doup L.E."/>
            <person name="Downes M."/>
            <person name="Dugan-Rocha S."/>
            <person name="Dunkov B.C."/>
            <person name="Dunn P."/>
            <person name="Durbin K.J."/>
            <person name="Evangelista C.C."/>
            <person name="Ferraz C."/>
            <person name="Ferriera S."/>
            <person name="Fleischmann W."/>
            <person name="Fosler C."/>
            <person name="Gabrielian A.E."/>
            <person name="Garg N.S."/>
            <person name="Gelbart W.M."/>
            <person name="Glasser K."/>
            <person name="Glodek A."/>
            <person name="Gong F."/>
            <person name="Gorrell J.H."/>
            <person name="Gu Z."/>
            <person name="Guan P."/>
            <person name="Harris M."/>
            <person name="Harris N.L."/>
            <person name="Harvey D.A."/>
            <person name="Heiman T.J."/>
            <person name="Hernandez J.R."/>
            <person name="Houck J."/>
            <person name="Hostin D."/>
            <person name="Houston K.A."/>
            <person name="Howland T.J."/>
            <person name="Wei M.-H."/>
            <person name="Ibegwam C."/>
            <person name="Jalali M."/>
            <person name="Kalush F."/>
            <person name="Karpen G.H."/>
            <person name="Ke Z."/>
            <person name="Kennison J.A."/>
            <person name="Ketchum K.A."/>
            <person name="Kimmel B.E."/>
            <person name="Kodira C.D."/>
            <person name="Kraft C.L."/>
            <person name="Kravitz S."/>
            <person name="Kulp D."/>
            <person name="Lai Z."/>
            <person name="Lasko P."/>
            <person name="Lei Y."/>
            <person name="Levitsky A.A."/>
            <person name="Li J.H."/>
            <person name="Li Z."/>
            <person name="Liang Y."/>
            <person name="Lin X."/>
            <person name="Liu X."/>
            <person name="Mattei B."/>
            <person name="McIntosh T.C."/>
            <person name="McLeod M.P."/>
            <person name="McPherson D."/>
            <person name="Merkulov G."/>
            <person name="Milshina N.V."/>
            <person name="Mobarry C."/>
            <person name="Morris J."/>
            <person name="Moshrefi A."/>
            <person name="Mount S.M."/>
            <person name="Moy M."/>
            <person name="Murphy B."/>
            <person name="Murphy L."/>
            <person name="Muzny D.M."/>
            <person name="Nelson D.L."/>
            <person name="Nelson D.R."/>
            <person name="Nelson K.A."/>
            <person name="Nixon K."/>
            <person name="Nusskern D.R."/>
            <person name="Pacleb J.M."/>
            <person name="Palazzolo M."/>
            <person name="Pittman G.S."/>
            <person name="Pan S."/>
            <person name="Pollard J."/>
            <person name="Puri V."/>
            <person name="Reese M.G."/>
            <person name="Reinert K."/>
            <person name="Remington K."/>
            <person name="Saunders R.D.C."/>
            <person name="Scheeler F."/>
            <person name="Shen H."/>
            <person name="Shue B.C."/>
            <person name="Siden-Kiamos I."/>
            <person name="Simpson M."/>
            <person name="Skupski M.P."/>
            <person name="Smith T.J."/>
            <person name="Spier E."/>
            <person name="Spradling A.C."/>
            <person name="Stapleton M."/>
            <person name="Strong R."/>
            <person name="Sun E."/>
            <person name="Svirskas R."/>
            <person name="Tector C."/>
            <person name="Turner R."/>
            <person name="Venter E."/>
            <person name="Wang A.H."/>
            <person name="Wang X."/>
            <person name="Wang Z.-Y."/>
            <person name="Wassarman D.A."/>
            <person name="Weinstock G.M."/>
            <person name="Weissenbach J."/>
            <person name="Williams S.M."/>
            <person name="Woodage T."/>
            <person name="Worley K.C."/>
            <person name="Wu D."/>
            <person name="Yang S."/>
            <person name="Yao Q.A."/>
            <person name="Ye J."/>
            <person name="Yeh R.-F."/>
            <person name="Zaveri J.S."/>
            <person name="Zhan M."/>
            <person name="Zhang G."/>
            <person name="Zhao Q."/>
            <person name="Zheng L."/>
            <person name="Zheng X.H."/>
            <person name="Zhong F.N."/>
            <person name="Zhong W."/>
            <person name="Zhou X."/>
            <person name="Zhu S.C."/>
            <person name="Zhu X."/>
            <person name="Smith H.O."/>
            <person name="Gibbs R.A."/>
            <person name="Myers E.W."/>
            <person name="Rubin G.M."/>
            <person name="Venter J.C."/>
        </authorList>
    </citation>
    <scope>NUCLEOTIDE SEQUENCE [LARGE SCALE GENOMIC DNA]</scope>
    <source>
        <strain>Berkeley</strain>
    </source>
</reference>
<reference key="4">
    <citation type="journal article" date="2002" name="Genome Biol.">
        <title>Annotation of the Drosophila melanogaster euchromatic genome: a systematic review.</title>
        <authorList>
            <person name="Misra S."/>
            <person name="Crosby M.A."/>
            <person name="Mungall C.J."/>
            <person name="Matthews B.B."/>
            <person name="Campbell K.S."/>
            <person name="Hradecky P."/>
            <person name="Huang Y."/>
            <person name="Kaminker J.S."/>
            <person name="Millburn G.H."/>
            <person name="Prochnik S.E."/>
            <person name="Smith C.D."/>
            <person name="Tupy J.L."/>
            <person name="Whitfield E.J."/>
            <person name="Bayraktaroglu L."/>
            <person name="Berman B.P."/>
            <person name="Bettencourt B.R."/>
            <person name="Celniker S.E."/>
            <person name="de Grey A.D.N.J."/>
            <person name="Drysdale R.A."/>
            <person name="Harris N.L."/>
            <person name="Richter J."/>
            <person name="Russo S."/>
            <person name="Schroeder A.J."/>
            <person name="Shu S.Q."/>
            <person name="Stapleton M."/>
            <person name="Yamada C."/>
            <person name="Ashburner M."/>
            <person name="Gelbart W.M."/>
            <person name="Rubin G.M."/>
            <person name="Lewis S.E."/>
        </authorList>
    </citation>
    <scope>GENOME REANNOTATION</scope>
    <scope>ALTERNATIVE SPLICING</scope>
    <source>
        <strain>Berkeley</strain>
    </source>
</reference>
<reference key="5">
    <citation type="journal article" date="2002" name="Genome Biol.">
        <title>A Drosophila full-length cDNA resource.</title>
        <authorList>
            <person name="Stapleton M."/>
            <person name="Carlson J.W."/>
            <person name="Brokstein P."/>
            <person name="Yu C."/>
            <person name="Champe M."/>
            <person name="George R.A."/>
            <person name="Guarin H."/>
            <person name="Kronmiller B."/>
            <person name="Pacleb J.M."/>
            <person name="Park S."/>
            <person name="Wan K.H."/>
            <person name="Rubin G.M."/>
            <person name="Celniker S.E."/>
        </authorList>
    </citation>
    <scope>NUCLEOTIDE SEQUENCE [LARGE SCALE MRNA] (ISOFORM B)</scope>
    <source>
        <strain>Berkeley</strain>
        <tissue>Head</tissue>
    </source>
</reference>
<keyword id="KW-0025">Alternative splicing</keyword>
<keyword id="KW-0378">Hydrolase</keyword>
<keyword id="KW-0460">Magnesium</keyword>
<keyword id="KW-0496">Mitochondrion</keyword>
<keyword id="KW-0511">Multifunctional enzyme</keyword>
<keyword id="KW-0520">NAD</keyword>
<keyword id="KW-0554">One-carbon metabolism</keyword>
<keyword id="KW-0560">Oxidoreductase</keyword>
<keyword id="KW-1185">Reference proteome</keyword>
<keyword id="KW-0809">Transit peptide</keyword>
<organism>
    <name type="scientific">Drosophila melanogaster</name>
    <name type="common">Fruit fly</name>
    <dbReference type="NCBI Taxonomy" id="7227"/>
    <lineage>
        <taxon>Eukaryota</taxon>
        <taxon>Metazoa</taxon>
        <taxon>Ecdysozoa</taxon>
        <taxon>Arthropoda</taxon>
        <taxon>Hexapoda</taxon>
        <taxon>Insecta</taxon>
        <taxon>Pterygota</taxon>
        <taxon>Neoptera</taxon>
        <taxon>Endopterygota</taxon>
        <taxon>Diptera</taxon>
        <taxon>Brachycera</taxon>
        <taxon>Muscomorpha</taxon>
        <taxon>Ephydroidea</taxon>
        <taxon>Drosophilidae</taxon>
        <taxon>Drosophila</taxon>
        <taxon>Sophophora</taxon>
    </lineage>
</organism>
<sequence length="309" mass="33551">MRFTSNMAQIIDGKAIAQEVRTQLAHELKGMEAAGYPKPHLTAVIVGEDPASEKYVANKMVACREVGISSETKRLPASTTQEELLQLIADLNKDPQVTGILVQLPVPEHINERTICNAVDVDKDVDGFNEVNIGRTALDMEANIPATPLGVKRLLEHMKIETLGRNAVVVGRSKNVSLPMAILLHADGKYATKAMDATVTICHRYTPPKELARHCRQADIIVVAVGKPGLITKDMVKPGACVIDVGINRIKDESTGQFKLVGDVDFEEVRQVAGHITPVPGGVGPMTVAMLMHNTLKAARKQFDDRKSS</sequence>
<dbReference type="EC" id="1.5.1.15"/>
<dbReference type="EC" id="3.5.4.9"/>
<dbReference type="EMBL" id="L07958">
    <property type="protein sequence ID" value="AAB41352.1"/>
    <property type="molecule type" value="mRNA"/>
</dbReference>
<dbReference type="EMBL" id="AF186073">
    <property type="protein sequence ID" value="AAF07929.1"/>
    <property type="molecule type" value="Genomic_DNA"/>
</dbReference>
<dbReference type="EMBL" id="AF186073">
    <property type="protein sequence ID" value="AAF07930.1"/>
    <property type="molecule type" value="Genomic_DNA"/>
</dbReference>
<dbReference type="EMBL" id="AE014297">
    <property type="protein sequence ID" value="AAF54332.1"/>
    <property type="molecule type" value="Genomic_DNA"/>
</dbReference>
<dbReference type="EMBL" id="AE014297">
    <property type="protein sequence ID" value="AAN13408.1"/>
    <property type="molecule type" value="Genomic_DNA"/>
</dbReference>
<dbReference type="EMBL" id="AY047498">
    <property type="protein sequence ID" value="AAK77230.1"/>
    <property type="molecule type" value="mRNA"/>
</dbReference>
<dbReference type="PIR" id="S32562">
    <property type="entry name" value="S32562"/>
</dbReference>
<dbReference type="RefSeq" id="NP_001262398.1">
    <molecule id="Q04448-2"/>
    <property type="nucleotide sequence ID" value="NM_001275469.1"/>
</dbReference>
<dbReference type="RefSeq" id="NP_476929.1">
    <molecule id="Q04448-1"/>
    <property type="nucleotide sequence ID" value="NM_057581.5"/>
</dbReference>
<dbReference type="RefSeq" id="NP_476930.1">
    <molecule id="Q04448-2"/>
    <property type="nucleotide sequence ID" value="NM_057582.5"/>
</dbReference>
<dbReference type="SMR" id="Q04448"/>
<dbReference type="BioGRID" id="71042">
    <property type="interactions" value="3"/>
</dbReference>
<dbReference type="FunCoup" id="Q04448">
    <property type="interactions" value="1119"/>
</dbReference>
<dbReference type="IntAct" id="Q04448">
    <property type="interactions" value="1"/>
</dbReference>
<dbReference type="STRING" id="7227.FBpp0081476"/>
<dbReference type="PaxDb" id="7227-FBpp0081476"/>
<dbReference type="EnsemblMetazoa" id="FBtr0081996">
    <molecule id="Q04448-1"/>
    <property type="protein sequence ID" value="FBpp0081476"/>
    <property type="gene ID" value="FBgn0010222"/>
</dbReference>
<dbReference type="EnsemblMetazoa" id="FBtr0081997">
    <molecule id="Q04448-2"/>
    <property type="protein sequence ID" value="FBpp0081477"/>
    <property type="gene ID" value="FBgn0010222"/>
</dbReference>
<dbReference type="EnsemblMetazoa" id="FBtr0336761">
    <molecule id="Q04448-2"/>
    <property type="protein sequence ID" value="FBpp0307737"/>
    <property type="gene ID" value="FBgn0010222"/>
</dbReference>
<dbReference type="GeneID" id="47895"/>
<dbReference type="KEGG" id="dme:Dmel_CG18466"/>
<dbReference type="AGR" id="FB:FBgn0010222"/>
<dbReference type="CTD" id="47895"/>
<dbReference type="FlyBase" id="FBgn0010222">
    <property type="gene designation" value="Nmdmc"/>
</dbReference>
<dbReference type="VEuPathDB" id="VectorBase:FBgn0010222"/>
<dbReference type="eggNOG" id="KOG0089">
    <property type="taxonomic scope" value="Eukaryota"/>
</dbReference>
<dbReference type="GeneTree" id="ENSGT00940000160901"/>
<dbReference type="InParanoid" id="Q04448"/>
<dbReference type="OMA" id="VCHILTK"/>
<dbReference type="OrthoDB" id="5126881at2759"/>
<dbReference type="PhylomeDB" id="Q04448"/>
<dbReference type="Reactome" id="R-DME-196757">
    <property type="pathway name" value="Metabolism of folate and pterines"/>
</dbReference>
<dbReference type="BioGRID-ORCS" id="47895">
    <property type="hits" value="0 hits in 3 CRISPR screens"/>
</dbReference>
<dbReference type="ChiTaRS" id="Nmdmc">
    <property type="organism name" value="fly"/>
</dbReference>
<dbReference type="GenomeRNAi" id="47895"/>
<dbReference type="PRO" id="PR:Q04448"/>
<dbReference type="Proteomes" id="UP000000803">
    <property type="component" value="Chromosome 3R"/>
</dbReference>
<dbReference type="Bgee" id="FBgn0010222">
    <property type="expression patterns" value="Expressed in adult middle midgut class I enteroendocrine cell in adult midgut (Drosophila) and 96 other cell types or tissues"/>
</dbReference>
<dbReference type="ExpressionAtlas" id="Q04448">
    <property type="expression patterns" value="baseline and differential"/>
</dbReference>
<dbReference type="GO" id="GO:0005739">
    <property type="term" value="C:mitochondrion"/>
    <property type="evidence" value="ECO:0000250"/>
    <property type="project" value="UniProtKB"/>
</dbReference>
<dbReference type="GO" id="GO:0000287">
    <property type="term" value="F:magnesium ion binding"/>
    <property type="evidence" value="ECO:0000250"/>
    <property type="project" value="UniProtKB"/>
</dbReference>
<dbReference type="GO" id="GO:0004477">
    <property type="term" value="F:methenyltetrahydrofolate cyclohydrolase activity"/>
    <property type="evidence" value="ECO:0000250"/>
    <property type="project" value="UniProtKB"/>
</dbReference>
<dbReference type="GO" id="GO:0004487">
    <property type="term" value="F:methylenetetrahydrofolate dehydrogenase (NAD+) activity"/>
    <property type="evidence" value="ECO:0000250"/>
    <property type="project" value="UniProtKB"/>
</dbReference>
<dbReference type="GO" id="GO:0004488">
    <property type="term" value="F:methylenetetrahydrofolate dehydrogenase (NADP+) activity"/>
    <property type="evidence" value="ECO:0000250"/>
    <property type="project" value="UniProtKB"/>
</dbReference>
<dbReference type="GO" id="GO:0042301">
    <property type="term" value="F:phosphate ion binding"/>
    <property type="evidence" value="ECO:0000250"/>
    <property type="project" value="UniProtKB"/>
</dbReference>
<dbReference type="GO" id="GO:0035999">
    <property type="term" value="P:tetrahydrofolate interconversion"/>
    <property type="evidence" value="ECO:0000318"/>
    <property type="project" value="GO_Central"/>
</dbReference>
<dbReference type="GO" id="GO:0046653">
    <property type="term" value="P:tetrahydrofolate metabolic process"/>
    <property type="evidence" value="ECO:0000250"/>
    <property type="project" value="UniProtKB"/>
</dbReference>
<dbReference type="CDD" id="cd01080">
    <property type="entry name" value="NAD_bind_m-THF_DH_Cyclohyd"/>
    <property type="match status" value="1"/>
</dbReference>
<dbReference type="FunFam" id="3.40.50.720:FF:000189">
    <property type="entry name" value="Bifunctional protein FolD"/>
    <property type="match status" value="1"/>
</dbReference>
<dbReference type="FunFam" id="3.40.50.10860:FF:000005">
    <property type="entry name" value="C-1-tetrahydrofolate synthase, cytoplasmic, putative"/>
    <property type="match status" value="1"/>
</dbReference>
<dbReference type="Gene3D" id="3.40.50.10860">
    <property type="entry name" value="Leucine Dehydrogenase, chain A, domain 1"/>
    <property type="match status" value="1"/>
</dbReference>
<dbReference type="Gene3D" id="3.40.50.720">
    <property type="entry name" value="NAD(P)-binding Rossmann-like Domain"/>
    <property type="match status" value="1"/>
</dbReference>
<dbReference type="HAMAP" id="MF_01576">
    <property type="entry name" value="THF_DHG_CYH"/>
    <property type="match status" value="1"/>
</dbReference>
<dbReference type="InterPro" id="IPR046346">
    <property type="entry name" value="Aminoacid_DH-like_N_sf"/>
</dbReference>
<dbReference type="InterPro" id="IPR036291">
    <property type="entry name" value="NAD(P)-bd_dom_sf"/>
</dbReference>
<dbReference type="InterPro" id="IPR000672">
    <property type="entry name" value="THF_DH/CycHdrlase"/>
</dbReference>
<dbReference type="InterPro" id="IPR020630">
    <property type="entry name" value="THF_DH/CycHdrlase_cat_dom"/>
</dbReference>
<dbReference type="InterPro" id="IPR020867">
    <property type="entry name" value="THF_DH/CycHdrlase_CS"/>
</dbReference>
<dbReference type="InterPro" id="IPR020631">
    <property type="entry name" value="THF_DH/CycHdrlase_NAD-bd_dom"/>
</dbReference>
<dbReference type="PANTHER" id="PTHR48099:SF11">
    <property type="entry name" value="BIFUNCTIONAL METHYLENETETRAHYDROFOLATE DEHYDROGENASE_CYCLOHYDROLASE, MITOCHONDRIAL"/>
    <property type="match status" value="1"/>
</dbReference>
<dbReference type="PANTHER" id="PTHR48099">
    <property type="entry name" value="C-1-TETRAHYDROFOLATE SYNTHASE, CYTOPLASMIC-RELATED"/>
    <property type="match status" value="1"/>
</dbReference>
<dbReference type="Pfam" id="PF00763">
    <property type="entry name" value="THF_DHG_CYH"/>
    <property type="match status" value="1"/>
</dbReference>
<dbReference type="Pfam" id="PF02882">
    <property type="entry name" value="THF_DHG_CYH_C"/>
    <property type="match status" value="1"/>
</dbReference>
<dbReference type="PRINTS" id="PR00085">
    <property type="entry name" value="THFDHDRGNASE"/>
</dbReference>
<dbReference type="SUPFAM" id="SSF53223">
    <property type="entry name" value="Aminoacid dehydrogenase-like, N-terminal domain"/>
    <property type="match status" value="1"/>
</dbReference>
<dbReference type="SUPFAM" id="SSF51735">
    <property type="entry name" value="NAD(P)-binding Rossmann-fold domains"/>
    <property type="match status" value="1"/>
</dbReference>
<dbReference type="PROSITE" id="PS00766">
    <property type="entry name" value="THF_DHG_CYH_1"/>
    <property type="match status" value="1"/>
</dbReference>
<dbReference type="PROSITE" id="PS00767">
    <property type="entry name" value="THF_DHG_CYH_2"/>
    <property type="match status" value="1"/>
</dbReference>
<evidence type="ECO:0000255" key="1"/>
<evidence type="ECO:0000269" key="2">
    <source>
    </source>
</evidence>
<evidence type="ECO:0000305" key="3"/>
<gene>
    <name type="primary">Nmdmc</name>
    <name type="ORF">CG18466</name>
</gene>
<name>MTDC_DROME</name>
<comment type="function">
    <text>May play a role in spermatogenesis.</text>
</comment>
<comment type="catalytic activity">
    <reaction>
        <text>(6R)-5,10-methylene-5,6,7,8-tetrahydrofolate + NAD(+) = (6R)-5,10-methenyltetrahydrofolate + NADH</text>
        <dbReference type="Rhea" id="RHEA:22892"/>
        <dbReference type="ChEBI" id="CHEBI:15636"/>
        <dbReference type="ChEBI" id="CHEBI:57455"/>
        <dbReference type="ChEBI" id="CHEBI:57540"/>
        <dbReference type="ChEBI" id="CHEBI:57945"/>
        <dbReference type="EC" id="1.5.1.15"/>
    </reaction>
</comment>
<comment type="catalytic activity">
    <reaction>
        <text>(6R)-5,10-methenyltetrahydrofolate + H2O = (6R)-10-formyltetrahydrofolate + H(+)</text>
        <dbReference type="Rhea" id="RHEA:23700"/>
        <dbReference type="ChEBI" id="CHEBI:15377"/>
        <dbReference type="ChEBI" id="CHEBI:15378"/>
        <dbReference type="ChEBI" id="CHEBI:57455"/>
        <dbReference type="ChEBI" id="CHEBI:195366"/>
        <dbReference type="EC" id="3.5.4.9"/>
    </reaction>
</comment>
<comment type="cofactor">
    <cofactor>
        <name>Mg(2+)</name>
        <dbReference type="ChEBI" id="CHEBI:18420"/>
    </cofactor>
</comment>
<comment type="subunit">
    <text>Homodimer.</text>
</comment>
<comment type="subcellular location">
    <subcellularLocation>
        <location>Mitochondrion</location>
    </subcellularLocation>
</comment>
<comment type="alternative products">
    <event type="alternative splicing"/>
    <isoform>
        <id>Q04448-1</id>
        <name>B</name>
        <name>Hedengren-A</name>
        <sequence type="displayed"/>
    </isoform>
    <isoform>
        <id>Q04448-2</id>
        <name>A</name>
        <name>Hedengren-B</name>
        <sequence type="described" ref="VSP_016458"/>
    </isoform>
</comment>
<comment type="developmental stage">
    <text evidence="2">Expressed in developing tissues and at high levels in adult tissues. Isoform A shows male-specific expression.</text>
</comment>
<comment type="miscellaneous">
    <text>This NAD-dependent bifunctional enzyme has very different kinetic properties than the larger NADP-dependent trifunctional enzyme and is unique in that it requires formation of an enzyme-magnesium complex to allow binding of NAD.</text>
</comment>
<comment type="similarity">
    <text evidence="3">Belongs to the tetrahydrofolate dehydrogenase/cyclohydrolase family.</text>
</comment>
<protein>
    <recommendedName>
        <fullName>Bifunctional methylenetetrahydrofolate dehydrogenase/cyclohydrolase, mitochondrial</fullName>
        <shortName>DNMDMC</shortName>
    </recommendedName>
    <domain>
        <recommendedName>
            <fullName>NAD-dependent methylenetetrahydrofolate dehydrogenase</fullName>
            <ecNumber>1.5.1.15</ecNumber>
        </recommendedName>
    </domain>
    <domain>
        <recommendedName>
            <fullName>Methenyltetrahydrofolate cyclohydrolase</fullName>
            <ecNumber>3.5.4.9</ecNumber>
        </recommendedName>
    </domain>
</protein>
<proteinExistence type="evidence at transcript level"/>
<accession>Q04448</accession>
<accession>Q7KSU1</accession>
<accession>Q9U6H6</accession>
<accession>Q9V3H4</accession>
<feature type="transit peptide" description="Mitochondrion" evidence="1">
    <location>
        <begin position="1"/>
        <end status="unknown"/>
    </location>
</feature>
<feature type="chain" id="PRO_0000034051" description="Bifunctional methylenetetrahydrofolate dehydrogenase/cyclohydrolase, mitochondrial">
    <location>
        <begin status="unknown"/>
        <end position="309"/>
    </location>
</feature>
<feature type="splice variant" id="VSP_016458" description="In isoform A." evidence="3">
    <location>
        <begin position="1"/>
        <end position="6"/>
    </location>
</feature>
<feature type="sequence conflict" description="In Ref. 1." evidence="3" ref="1">
    <original>MRFT</original>
    <variation>MATVMGPTPPGTGVMWPAIWRTSSKAIGIRQSVQFEFSTRKISQKPQKEVTI</variation>
    <location>
        <begin position="1"/>
        <end position="4"/>
    </location>
</feature>